<organism>
    <name type="scientific">Rhodobacter capsulatus</name>
    <name type="common">Rhodopseudomonas capsulata</name>
    <dbReference type="NCBI Taxonomy" id="1061"/>
    <lineage>
        <taxon>Bacteria</taxon>
        <taxon>Pseudomonadati</taxon>
        <taxon>Pseudomonadota</taxon>
        <taxon>Alphaproteobacteria</taxon>
        <taxon>Rhodobacterales</taxon>
        <taxon>Rhodobacter group</taxon>
        <taxon>Rhodobacter</taxon>
    </lineage>
</organism>
<gene>
    <name evidence="1" type="primary">fabH</name>
</gene>
<protein>
    <recommendedName>
        <fullName evidence="1">Beta-ketoacyl-[acyl-carrier-protein] synthase III</fullName>
        <shortName evidence="1">Beta-ketoacyl-ACP synthase III</shortName>
        <shortName evidence="1">KAS III</shortName>
        <ecNumber evidence="1">2.3.1.180</ecNumber>
    </recommendedName>
    <alternativeName>
        <fullName evidence="1">3-oxoacyl-[acyl-carrier-protein] synthase 3</fullName>
    </alternativeName>
    <alternativeName>
        <fullName evidence="1">3-oxoacyl-[acyl-carrier-protein] synthase III</fullName>
    </alternativeName>
</protein>
<proteinExistence type="inferred from homology"/>
<feature type="chain" id="PRO_0000110460" description="Beta-ketoacyl-[acyl-carrier-protein] synthase III">
    <location>
        <begin position="1"/>
        <end position="324"/>
    </location>
</feature>
<feature type="region of interest" description="ACP-binding" evidence="1">
    <location>
        <begin position="252"/>
        <end position="256"/>
    </location>
</feature>
<feature type="active site" evidence="1">
    <location>
        <position position="114"/>
    </location>
</feature>
<feature type="active site" evidence="1">
    <location>
        <position position="251"/>
    </location>
</feature>
<feature type="active site" evidence="1">
    <location>
        <position position="281"/>
    </location>
</feature>
<dbReference type="EC" id="2.3.1.180" evidence="1"/>
<dbReference type="EMBL" id="M84030">
    <property type="protein sequence ID" value="AAA26127.1"/>
    <property type="molecule type" value="Genomic_DNA"/>
</dbReference>
<dbReference type="PIR" id="C41608">
    <property type="entry name" value="C41608"/>
</dbReference>
<dbReference type="SMR" id="P30790"/>
<dbReference type="UniPathway" id="UPA00094"/>
<dbReference type="GO" id="GO:0005737">
    <property type="term" value="C:cytoplasm"/>
    <property type="evidence" value="ECO:0007669"/>
    <property type="project" value="UniProtKB-SubCell"/>
</dbReference>
<dbReference type="GO" id="GO:0004315">
    <property type="term" value="F:3-oxoacyl-[acyl-carrier-protein] synthase activity"/>
    <property type="evidence" value="ECO:0007669"/>
    <property type="project" value="InterPro"/>
</dbReference>
<dbReference type="GO" id="GO:0033818">
    <property type="term" value="F:beta-ketoacyl-acyl-carrier-protein synthase III activity"/>
    <property type="evidence" value="ECO:0007669"/>
    <property type="project" value="UniProtKB-UniRule"/>
</dbReference>
<dbReference type="GO" id="GO:0006633">
    <property type="term" value="P:fatty acid biosynthetic process"/>
    <property type="evidence" value="ECO:0007669"/>
    <property type="project" value="UniProtKB-UniRule"/>
</dbReference>
<dbReference type="GO" id="GO:0044550">
    <property type="term" value="P:secondary metabolite biosynthetic process"/>
    <property type="evidence" value="ECO:0007669"/>
    <property type="project" value="TreeGrafter"/>
</dbReference>
<dbReference type="CDD" id="cd00830">
    <property type="entry name" value="KAS_III"/>
    <property type="match status" value="1"/>
</dbReference>
<dbReference type="FunFam" id="3.40.47.10:FF:000004">
    <property type="entry name" value="3-oxoacyl-[acyl-carrier-protein] synthase 3"/>
    <property type="match status" value="1"/>
</dbReference>
<dbReference type="Gene3D" id="3.40.47.10">
    <property type="match status" value="1"/>
</dbReference>
<dbReference type="HAMAP" id="MF_01815">
    <property type="entry name" value="FabH"/>
    <property type="match status" value="1"/>
</dbReference>
<dbReference type="InterPro" id="IPR013747">
    <property type="entry name" value="ACP_syn_III_C"/>
</dbReference>
<dbReference type="InterPro" id="IPR013751">
    <property type="entry name" value="ACP_syn_III_N"/>
</dbReference>
<dbReference type="InterPro" id="IPR004655">
    <property type="entry name" value="FabH"/>
</dbReference>
<dbReference type="InterPro" id="IPR016039">
    <property type="entry name" value="Thiolase-like"/>
</dbReference>
<dbReference type="NCBIfam" id="TIGR00747">
    <property type="entry name" value="fabH"/>
    <property type="match status" value="1"/>
</dbReference>
<dbReference type="NCBIfam" id="NF006829">
    <property type="entry name" value="PRK09352.1"/>
    <property type="match status" value="1"/>
</dbReference>
<dbReference type="PANTHER" id="PTHR34069">
    <property type="entry name" value="3-OXOACYL-[ACYL-CARRIER-PROTEIN] SYNTHASE 3"/>
    <property type="match status" value="1"/>
</dbReference>
<dbReference type="PANTHER" id="PTHR34069:SF2">
    <property type="entry name" value="BETA-KETOACYL-[ACYL-CARRIER-PROTEIN] SYNTHASE III"/>
    <property type="match status" value="1"/>
</dbReference>
<dbReference type="Pfam" id="PF08545">
    <property type="entry name" value="ACP_syn_III"/>
    <property type="match status" value="1"/>
</dbReference>
<dbReference type="Pfam" id="PF08541">
    <property type="entry name" value="ACP_syn_III_C"/>
    <property type="match status" value="1"/>
</dbReference>
<dbReference type="SUPFAM" id="SSF53901">
    <property type="entry name" value="Thiolase-like"/>
    <property type="match status" value="1"/>
</dbReference>
<sequence length="324" mass="33732">MTIRAVVRGVGHYLPARVVENAEFEGKLDTTDEWIRSRTGIERRHFAAEGETTSQLAIKAAAAALADAGLSAADIDAIVVATSTPDFTFPSVATMVQAGLGNTNAFAFDVQAVCAGFVFALANANGMILSGQAKRVLVIGAETFSRIMDWADRGTCVLFGDGAGAVILEAAEGAGTAADRGILASDLHSDGRYRELLYVDGGVSTNGQSGHLRMQGNAVFKHAVQKLAETAHAALAKAGLTPEDVSWIVPHQANLRIITATAERMGVPMERVVVTVADHGNTSAASIPLALSTARARGQIKAGDLIVTEAIGGGLAWGSVVLRW</sequence>
<keyword id="KW-0012">Acyltransferase</keyword>
<keyword id="KW-0963">Cytoplasm</keyword>
<keyword id="KW-0275">Fatty acid biosynthesis</keyword>
<keyword id="KW-0276">Fatty acid metabolism</keyword>
<keyword id="KW-0444">Lipid biosynthesis</keyword>
<keyword id="KW-0443">Lipid metabolism</keyword>
<keyword id="KW-0511">Multifunctional enzyme</keyword>
<keyword id="KW-0808">Transferase</keyword>
<comment type="function">
    <text evidence="1">Catalyzes the condensation reaction of fatty acid synthesis by the addition to an acyl acceptor of two carbons from malonyl-ACP. Catalyzes the first condensation reaction which initiates fatty acid synthesis and may therefore play a role in governing the total rate of fatty acid production. Possesses both acetoacetyl-ACP synthase and acetyl transacylase activities. Its substrate specificity determines the biosynthesis of branched-chain and/or straight-chain of fatty acids.</text>
</comment>
<comment type="catalytic activity">
    <reaction evidence="1">
        <text>malonyl-[ACP] + acetyl-CoA + H(+) = 3-oxobutanoyl-[ACP] + CO2 + CoA</text>
        <dbReference type="Rhea" id="RHEA:12080"/>
        <dbReference type="Rhea" id="RHEA-COMP:9623"/>
        <dbReference type="Rhea" id="RHEA-COMP:9625"/>
        <dbReference type="ChEBI" id="CHEBI:15378"/>
        <dbReference type="ChEBI" id="CHEBI:16526"/>
        <dbReference type="ChEBI" id="CHEBI:57287"/>
        <dbReference type="ChEBI" id="CHEBI:57288"/>
        <dbReference type="ChEBI" id="CHEBI:78449"/>
        <dbReference type="ChEBI" id="CHEBI:78450"/>
        <dbReference type="EC" id="2.3.1.180"/>
    </reaction>
</comment>
<comment type="pathway">
    <text evidence="1">Lipid metabolism; fatty acid biosynthesis.</text>
</comment>
<comment type="subunit">
    <text evidence="1">Homodimer.</text>
</comment>
<comment type="subcellular location">
    <subcellularLocation>
        <location evidence="1">Cytoplasm</location>
    </subcellularLocation>
</comment>
<comment type="domain">
    <text evidence="1">The last Arg residue of the ACP-binding site is essential for the weak association between ACP/AcpP and FabH.</text>
</comment>
<comment type="similarity">
    <text evidence="1">Belongs to the thiolase-like superfamily. FabH family.</text>
</comment>
<accession>P30790</accession>
<evidence type="ECO:0000255" key="1">
    <source>
        <dbReference type="HAMAP-Rule" id="MF_01815"/>
    </source>
</evidence>
<reference key="1">
    <citation type="journal article" date="1991" name="Proc. Natl. Acad. Sci. U.S.A.">
        <title>A mutation in a Rhodobacter capsulatus gene encoding an integration host factor-like protein impairs in vivo hydrogenase expression.</title>
        <authorList>
            <person name="Toussaint B."/>
            <person name="Bosc C."/>
            <person name="Richaud P."/>
            <person name="Colbeau A."/>
            <person name="Vignais P.M."/>
        </authorList>
    </citation>
    <scope>NUCLEOTIDE SEQUENCE [GENOMIC DNA]</scope>
</reference>
<reference key="2">
    <citation type="journal article" date="1994" name="FEMS Microbiol. Lett.">
        <title>Identification of the rpmF-plsX-fabH genes of Rhodobacter capsulatus.</title>
        <authorList>
            <person name="Carty S.M."/>
            <person name="Colbeau A."/>
            <person name="Vignais P.M."/>
            <person name="Larson T.J."/>
        </authorList>
    </citation>
    <scope>IDENTIFICATION</scope>
</reference>
<name>FABH_RHOCA</name>